<accession>A4YHJ3</accession>
<comment type="function">
    <text evidence="1">Allows the formation of correctly charged Asn-tRNA(Asn) or Gln-tRNA(Gln) through the transamidation of misacylated Asp-tRNA(Asn) or Glu-tRNA(Gln) in organisms which lack either or both of asparaginyl-tRNA or glutaminyl-tRNA synthetases. The reaction takes place in the presence of glutamine and ATP through an activated phospho-Asp-tRNA(Asn) or phospho-Glu-tRNA(Gln).</text>
</comment>
<comment type="catalytic activity">
    <reaction evidence="1">
        <text>L-glutamyl-tRNA(Gln) + L-glutamine + ATP + H2O = L-glutaminyl-tRNA(Gln) + L-glutamate + ADP + phosphate + H(+)</text>
        <dbReference type="Rhea" id="RHEA:17521"/>
        <dbReference type="Rhea" id="RHEA-COMP:9681"/>
        <dbReference type="Rhea" id="RHEA-COMP:9684"/>
        <dbReference type="ChEBI" id="CHEBI:15377"/>
        <dbReference type="ChEBI" id="CHEBI:15378"/>
        <dbReference type="ChEBI" id="CHEBI:29985"/>
        <dbReference type="ChEBI" id="CHEBI:30616"/>
        <dbReference type="ChEBI" id="CHEBI:43474"/>
        <dbReference type="ChEBI" id="CHEBI:58359"/>
        <dbReference type="ChEBI" id="CHEBI:78520"/>
        <dbReference type="ChEBI" id="CHEBI:78521"/>
        <dbReference type="ChEBI" id="CHEBI:456216"/>
    </reaction>
</comment>
<comment type="catalytic activity">
    <reaction evidence="1">
        <text>L-aspartyl-tRNA(Asn) + L-glutamine + ATP + H2O = L-asparaginyl-tRNA(Asn) + L-glutamate + ADP + phosphate + 2 H(+)</text>
        <dbReference type="Rhea" id="RHEA:14513"/>
        <dbReference type="Rhea" id="RHEA-COMP:9674"/>
        <dbReference type="Rhea" id="RHEA-COMP:9677"/>
        <dbReference type="ChEBI" id="CHEBI:15377"/>
        <dbReference type="ChEBI" id="CHEBI:15378"/>
        <dbReference type="ChEBI" id="CHEBI:29985"/>
        <dbReference type="ChEBI" id="CHEBI:30616"/>
        <dbReference type="ChEBI" id="CHEBI:43474"/>
        <dbReference type="ChEBI" id="CHEBI:58359"/>
        <dbReference type="ChEBI" id="CHEBI:78515"/>
        <dbReference type="ChEBI" id="CHEBI:78516"/>
        <dbReference type="ChEBI" id="CHEBI:456216"/>
    </reaction>
</comment>
<comment type="subunit">
    <text evidence="1">Heterotrimer of A, B and C subunits.</text>
</comment>
<comment type="similarity">
    <text evidence="1">Belongs to the GatC family.</text>
</comment>
<name>GATC_METS5</name>
<feature type="chain" id="PRO_1000071387" description="Aspartyl/glutamyl-tRNA(Asn/Gln) amidotransferase subunit C">
    <location>
        <begin position="1"/>
        <end position="97"/>
    </location>
</feature>
<feature type="region of interest" description="Disordered" evidence="2">
    <location>
        <begin position="59"/>
        <end position="78"/>
    </location>
</feature>
<feature type="compositionally biased region" description="Basic and acidic residues" evidence="2">
    <location>
        <begin position="63"/>
        <end position="78"/>
    </location>
</feature>
<proteinExistence type="inferred from homology"/>
<evidence type="ECO:0000255" key="1">
    <source>
        <dbReference type="HAMAP-Rule" id="MF_00122"/>
    </source>
</evidence>
<evidence type="ECO:0000256" key="2">
    <source>
        <dbReference type="SAM" id="MobiDB-lite"/>
    </source>
</evidence>
<keyword id="KW-0067">ATP-binding</keyword>
<keyword id="KW-0436">Ligase</keyword>
<keyword id="KW-0547">Nucleotide-binding</keyword>
<keyword id="KW-0648">Protein biosynthesis</keyword>
<keyword id="KW-1185">Reference proteome</keyword>
<protein>
    <recommendedName>
        <fullName evidence="1">Aspartyl/glutamyl-tRNA(Asn/Gln) amidotransferase subunit C</fullName>
        <shortName evidence="1">Asp/Glu-ADT subunit C</shortName>
        <ecNumber evidence="1">6.3.5.-</ecNumber>
    </recommendedName>
</protein>
<sequence length="97" mass="11025">MKVQVDEELMRKLEKLALISLTDQERQEFMRDLTKILDFFNKIDELNLEGVEPMFHPLSTGKLRPDEPAQPLSRDDALANVPKKKDGYIIGPSTIGG</sequence>
<dbReference type="EC" id="6.3.5.-" evidence="1"/>
<dbReference type="EMBL" id="CP000682">
    <property type="protein sequence ID" value="ABP95895.1"/>
    <property type="molecule type" value="Genomic_DNA"/>
</dbReference>
<dbReference type="RefSeq" id="WP_012021682.1">
    <property type="nucleotide sequence ID" value="NC_009440.1"/>
</dbReference>
<dbReference type="SMR" id="A4YHJ3"/>
<dbReference type="STRING" id="399549.Msed_1740"/>
<dbReference type="GeneID" id="91756252"/>
<dbReference type="KEGG" id="mse:Msed_1740"/>
<dbReference type="eggNOG" id="arCOG02726">
    <property type="taxonomic scope" value="Archaea"/>
</dbReference>
<dbReference type="HOGENOM" id="CLU_105899_4_1_2"/>
<dbReference type="Proteomes" id="UP000000242">
    <property type="component" value="Chromosome"/>
</dbReference>
<dbReference type="GO" id="GO:0050566">
    <property type="term" value="F:asparaginyl-tRNA synthase (glutamine-hydrolyzing) activity"/>
    <property type="evidence" value="ECO:0007669"/>
    <property type="project" value="RHEA"/>
</dbReference>
<dbReference type="GO" id="GO:0005524">
    <property type="term" value="F:ATP binding"/>
    <property type="evidence" value="ECO:0007669"/>
    <property type="project" value="UniProtKB-KW"/>
</dbReference>
<dbReference type="GO" id="GO:0050567">
    <property type="term" value="F:glutaminyl-tRNA synthase (glutamine-hydrolyzing) activity"/>
    <property type="evidence" value="ECO:0007669"/>
    <property type="project" value="UniProtKB-UniRule"/>
</dbReference>
<dbReference type="GO" id="GO:0070681">
    <property type="term" value="P:glutaminyl-tRNAGln biosynthesis via transamidation"/>
    <property type="evidence" value="ECO:0007669"/>
    <property type="project" value="TreeGrafter"/>
</dbReference>
<dbReference type="GO" id="GO:0006450">
    <property type="term" value="P:regulation of translational fidelity"/>
    <property type="evidence" value="ECO:0007669"/>
    <property type="project" value="InterPro"/>
</dbReference>
<dbReference type="GO" id="GO:0006412">
    <property type="term" value="P:translation"/>
    <property type="evidence" value="ECO:0007669"/>
    <property type="project" value="UniProtKB-UniRule"/>
</dbReference>
<dbReference type="Gene3D" id="1.10.20.60">
    <property type="entry name" value="Glu-tRNAGln amidotransferase C subunit, N-terminal domain"/>
    <property type="match status" value="1"/>
</dbReference>
<dbReference type="HAMAP" id="MF_00122">
    <property type="entry name" value="GatC"/>
    <property type="match status" value="1"/>
</dbReference>
<dbReference type="InterPro" id="IPR036113">
    <property type="entry name" value="Asp/Glu-ADT_sf_sub_c"/>
</dbReference>
<dbReference type="InterPro" id="IPR003837">
    <property type="entry name" value="GatC"/>
</dbReference>
<dbReference type="NCBIfam" id="TIGR00135">
    <property type="entry name" value="gatC"/>
    <property type="match status" value="1"/>
</dbReference>
<dbReference type="NCBIfam" id="NF000684">
    <property type="entry name" value="PRK00034.3-4"/>
    <property type="match status" value="1"/>
</dbReference>
<dbReference type="PANTHER" id="PTHR15004">
    <property type="entry name" value="GLUTAMYL-TRNA(GLN) AMIDOTRANSFERASE SUBUNIT C, MITOCHONDRIAL"/>
    <property type="match status" value="1"/>
</dbReference>
<dbReference type="PANTHER" id="PTHR15004:SF0">
    <property type="entry name" value="GLUTAMYL-TRNA(GLN) AMIDOTRANSFERASE SUBUNIT C, MITOCHONDRIAL"/>
    <property type="match status" value="1"/>
</dbReference>
<dbReference type="Pfam" id="PF02686">
    <property type="entry name" value="GatC"/>
    <property type="match status" value="1"/>
</dbReference>
<dbReference type="SUPFAM" id="SSF141000">
    <property type="entry name" value="Glu-tRNAGln amidotransferase C subunit"/>
    <property type="match status" value="1"/>
</dbReference>
<organism>
    <name type="scientific">Metallosphaera sedula (strain ATCC 51363 / DSM 5348 / JCM 9185 / NBRC 15509 / TH2)</name>
    <dbReference type="NCBI Taxonomy" id="399549"/>
    <lineage>
        <taxon>Archaea</taxon>
        <taxon>Thermoproteota</taxon>
        <taxon>Thermoprotei</taxon>
        <taxon>Sulfolobales</taxon>
        <taxon>Sulfolobaceae</taxon>
        <taxon>Metallosphaera</taxon>
    </lineage>
</organism>
<gene>
    <name evidence="1" type="primary">gatC</name>
    <name type="ordered locus">Msed_1740</name>
</gene>
<reference key="1">
    <citation type="journal article" date="2008" name="Appl. Environ. Microbiol.">
        <title>The genome sequence of the metal-mobilizing, extremely thermoacidophilic archaeon Metallosphaera sedula provides insights into bioleaching-associated metabolism.</title>
        <authorList>
            <person name="Auernik K.S."/>
            <person name="Maezato Y."/>
            <person name="Blum P.H."/>
            <person name="Kelly R.M."/>
        </authorList>
    </citation>
    <scope>NUCLEOTIDE SEQUENCE [LARGE SCALE GENOMIC DNA]</scope>
    <source>
        <strain>ATCC 51363 / DSM 5348 / JCM 9185 / NBRC 15509 / TH2</strain>
    </source>
</reference>